<comment type="function">
    <text evidence="2">Cell wall formation.</text>
</comment>
<comment type="catalytic activity">
    <reaction evidence="2">
        <text>2 D-alanine + ATP = D-alanyl-D-alanine + ADP + phosphate + H(+)</text>
        <dbReference type="Rhea" id="RHEA:11224"/>
        <dbReference type="ChEBI" id="CHEBI:15378"/>
        <dbReference type="ChEBI" id="CHEBI:30616"/>
        <dbReference type="ChEBI" id="CHEBI:43474"/>
        <dbReference type="ChEBI" id="CHEBI:57416"/>
        <dbReference type="ChEBI" id="CHEBI:57822"/>
        <dbReference type="ChEBI" id="CHEBI:456216"/>
        <dbReference type="EC" id="6.3.2.4"/>
    </reaction>
</comment>
<comment type="cofactor">
    <cofactor evidence="1">
        <name>Mg(2+)</name>
        <dbReference type="ChEBI" id="CHEBI:18420"/>
    </cofactor>
    <cofactor evidence="1">
        <name>Mn(2+)</name>
        <dbReference type="ChEBI" id="CHEBI:29035"/>
    </cofactor>
    <text evidence="1">Binds 2 magnesium or manganese ions per subunit.</text>
</comment>
<comment type="pathway">
    <text evidence="2">Cell wall biogenesis; peptidoglycan biosynthesis.</text>
</comment>
<comment type="subcellular location">
    <subcellularLocation>
        <location evidence="2">Cytoplasm</location>
    </subcellularLocation>
</comment>
<comment type="similarity">
    <text evidence="2">Belongs to the D-alanine--D-alanine ligase family.</text>
</comment>
<protein>
    <recommendedName>
        <fullName evidence="2">D-alanine--D-alanine ligase</fullName>
        <ecNumber evidence="2">6.3.2.4</ecNumber>
    </recommendedName>
    <alternativeName>
        <fullName evidence="2">D-Ala-D-Ala ligase</fullName>
    </alternativeName>
    <alternativeName>
        <fullName evidence="2">D-alanylalanine synthetase</fullName>
    </alternativeName>
</protein>
<reference key="1">
    <citation type="journal article" date="2003" name="Genome Res.">
        <title>Genome sequence of an M3 strain of Streptococcus pyogenes reveals a large-scale genomic rearrangement in invasive strains and new insights into phage evolution.</title>
        <authorList>
            <person name="Nakagawa I."/>
            <person name="Kurokawa K."/>
            <person name="Yamashita A."/>
            <person name="Nakata M."/>
            <person name="Tomiyasu Y."/>
            <person name="Okahashi N."/>
            <person name="Kawabata S."/>
            <person name="Yamazaki K."/>
            <person name="Shiba T."/>
            <person name="Yasunaga T."/>
            <person name="Hayashi H."/>
            <person name="Hattori M."/>
            <person name="Hamada S."/>
        </authorList>
    </citation>
    <scope>NUCLEOTIDE SEQUENCE [LARGE SCALE GENOMIC DNA]</scope>
    <source>
        <strain>SSI-1</strain>
    </source>
</reference>
<gene>
    <name evidence="2" type="primary">ddl</name>
    <name type="synonym">ddlA</name>
    <name type="ordered locus">SPs0780</name>
</gene>
<evidence type="ECO:0000250" key="1"/>
<evidence type="ECO:0000255" key="2">
    <source>
        <dbReference type="HAMAP-Rule" id="MF_00047"/>
    </source>
</evidence>
<sequence length="348" mass="38951">MSKQTLVLLYGGRSAEREVSVLSAESVMRAVNYDKFLVKTYFITQMGQFIKTQQFSEKPSESERLMTNETIELTQKIKPSDIYEEGAVVFPVLHGPMGEDGSIQGFLEVLRMPYIGTNVMSSSIAMDKITTKRVLESIGIPQVAYTVYIDGQDLEACLVETLARLTFPIFVKPANMGSSVGISKAQTKVELRKAIQLALTYDSRVLIEQGVVAREIEVGLLGNDKVKSTLPGEVIKDVDFYDYQAKYVDNKITMAIPADVDQSIVTEMRSYAEVAFKALGGCGLSRCDFFLTQDGQVYLNELNTMPGFTQWSMYPLLWENMGLAYPDLIEELVTLAQEIFDQRESHLI</sequence>
<dbReference type="EC" id="6.3.2.4" evidence="2"/>
<dbReference type="EMBL" id="BA000034">
    <property type="protein sequence ID" value="BAC63875.1"/>
    <property type="molecule type" value="Genomic_DNA"/>
</dbReference>
<dbReference type="RefSeq" id="WP_002983941.1">
    <property type="nucleotide sequence ID" value="NC_004606.1"/>
</dbReference>
<dbReference type="SMR" id="P0DA51"/>
<dbReference type="KEGG" id="sps:SPs0780"/>
<dbReference type="HOGENOM" id="CLU_039268_0_0_9"/>
<dbReference type="UniPathway" id="UPA00219"/>
<dbReference type="GO" id="GO:0005829">
    <property type="term" value="C:cytosol"/>
    <property type="evidence" value="ECO:0007669"/>
    <property type="project" value="TreeGrafter"/>
</dbReference>
<dbReference type="GO" id="GO:0005524">
    <property type="term" value="F:ATP binding"/>
    <property type="evidence" value="ECO:0007669"/>
    <property type="project" value="UniProtKB-KW"/>
</dbReference>
<dbReference type="GO" id="GO:0008716">
    <property type="term" value="F:D-alanine-D-alanine ligase activity"/>
    <property type="evidence" value="ECO:0007669"/>
    <property type="project" value="UniProtKB-UniRule"/>
</dbReference>
<dbReference type="GO" id="GO:0046872">
    <property type="term" value="F:metal ion binding"/>
    <property type="evidence" value="ECO:0007669"/>
    <property type="project" value="UniProtKB-KW"/>
</dbReference>
<dbReference type="GO" id="GO:0071555">
    <property type="term" value="P:cell wall organization"/>
    <property type="evidence" value="ECO:0007669"/>
    <property type="project" value="UniProtKB-KW"/>
</dbReference>
<dbReference type="GO" id="GO:0009252">
    <property type="term" value="P:peptidoglycan biosynthetic process"/>
    <property type="evidence" value="ECO:0007669"/>
    <property type="project" value="UniProtKB-UniRule"/>
</dbReference>
<dbReference type="GO" id="GO:0008360">
    <property type="term" value="P:regulation of cell shape"/>
    <property type="evidence" value="ECO:0007669"/>
    <property type="project" value="UniProtKB-KW"/>
</dbReference>
<dbReference type="FunFam" id="3.30.1490.20:FF:000007">
    <property type="entry name" value="D-alanine--D-alanine ligase"/>
    <property type="match status" value="1"/>
</dbReference>
<dbReference type="FunFam" id="3.30.470.20:FF:000008">
    <property type="entry name" value="D-alanine--D-alanine ligase"/>
    <property type="match status" value="1"/>
</dbReference>
<dbReference type="Gene3D" id="3.40.50.20">
    <property type="match status" value="1"/>
</dbReference>
<dbReference type="Gene3D" id="3.30.1490.20">
    <property type="entry name" value="ATP-grasp fold, A domain"/>
    <property type="match status" value="1"/>
</dbReference>
<dbReference type="Gene3D" id="3.30.470.20">
    <property type="entry name" value="ATP-grasp fold, B domain"/>
    <property type="match status" value="1"/>
</dbReference>
<dbReference type="HAMAP" id="MF_00047">
    <property type="entry name" value="Dala_Dala_lig"/>
    <property type="match status" value="1"/>
</dbReference>
<dbReference type="InterPro" id="IPR011761">
    <property type="entry name" value="ATP-grasp"/>
</dbReference>
<dbReference type="InterPro" id="IPR013815">
    <property type="entry name" value="ATP_grasp_subdomain_1"/>
</dbReference>
<dbReference type="InterPro" id="IPR000291">
    <property type="entry name" value="D-Ala_lig_Van_CS"/>
</dbReference>
<dbReference type="InterPro" id="IPR005905">
    <property type="entry name" value="D_ala_D_ala"/>
</dbReference>
<dbReference type="InterPro" id="IPR011095">
    <property type="entry name" value="Dala_Dala_lig_C"/>
</dbReference>
<dbReference type="InterPro" id="IPR011127">
    <property type="entry name" value="Dala_Dala_lig_N"/>
</dbReference>
<dbReference type="InterPro" id="IPR016185">
    <property type="entry name" value="PreATP-grasp_dom_sf"/>
</dbReference>
<dbReference type="NCBIfam" id="TIGR01205">
    <property type="entry name" value="D_ala_D_alaTIGR"/>
    <property type="match status" value="1"/>
</dbReference>
<dbReference type="NCBIfam" id="NF002528">
    <property type="entry name" value="PRK01966.1-4"/>
    <property type="match status" value="1"/>
</dbReference>
<dbReference type="NCBIfam" id="NF002529">
    <property type="entry name" value="PRK01966.1-5"/>
    <property type="match status" value="1"/>
</dbReference>
<dbReference type="PANTHER" id="PTHR23132">
    <property type="entry name" value="D-ALANINE--D-ALANINE LIGASE"/>
    <property type="match status" value="1"/>
</dbReference>
<dbReference type="PANTHER" id="PTHR23132:SF25">
    <property type="entry name" value="D-ALANINE--D-ALANINE LIGASE A"/>
    <property type="match status" value="1"/>
</dbReference>
<dbReference type="Pfam" id="PF07478">
    <property type="entry name" value="Dala_Dala_lig_C"/>
    <property type="match status" value="1"/>
</dbReference>
<dbReference type="Pfam" id="PF01820">
    <property type="entry name" value="Dala_Dala_lig_N"/>
    <property type="match status" value="1"/>
</dbReference>
<dbReference type="PIRSF" id="PIRSF039102">
    <property type="entry name" value="Ddl/VanB"/>
    <property type="match status" value="1"/>
</dbReference>
<dbReference type="SUPFAM" id="SSF56059">
    <property type="entry name" value="Glutathione synthetase ATP-binding domain-like"/>
    <property type="match status" value="1"/>
</dbReference>
<dbReference type="SUPFAM" id="SSF52440">
    <property type="entry name" value="PreATP-grasp domain"/>
    <property type="match status" value="1"/>
</dbReference>
<dbReference type="PROSITE" id="PS50975">
    <property type="entry name" value="ATP_GRASP"/>
    <property type="match status" value="1"/>
</dbReference>
<dbReference type="PROSITE" id="PS00843">
    <property type="entry name" value="DALA_DALA_LIGASE_1"/>
    <property type="match status" value="1"/>
</dbReference>
<dbReference type="PROSITE" id="PS00844">
    <property type="entry name" value="DALA_DALA_LIGASE_2"/>
    <property type="match status" value="1"/>
</dbReference>
<feature type="chain" id="PRO_0000411313" description="D-alanine--D-alanine ligase">
    <location>
        <begin position="1"/>
        <end position="348"/>
    </location>
</feature>
<feature type="domain" description="ATP-grasp" evidence="2">
    <location>
        <begin position="132"/>
        <end position="334"/>
    </location>
</feature>
<feature type="binding site" evidence="2">
    <location>
        <begin position="162"/>
        <end position="217"/>
    </location>
    <ligand>
        <name>ATP</name>
        <dbReference type="ChEBI" id="CHEBI:30616"/>
    </ligand>
</feature>
<feature type="binding site" evidence="2">
    <location>
        <position position="288"/>
    </location>
    <ligand>
        <name>Mg(2+)</name>
        <dbReference type="ChEBI" id="CHEBI:18420"/>
        <label>1</label>
    </ligand>
</feature>
<feature type="binding site" evidence="2">
    <location>
        <position position="301"/>
    </location>
    <ligand>
        <name>Mg(2+)</name>
        <dbReference type="ChEBI" id="CHEBI:18420"/>
        <label>1</label>
    </ligand>
</feature>
<feature type="binding site" evidence="2">
    <location>
        <position position="301"/>
    </location>
    <ligand>
        <name>Mg(2+)</name>
        <dbReference type="ChEBI" id="CHEBI:18420"/>
        <label>2</label>
    </ligand>
</feature>
<feature type="binding site" evidence="2">
    <location>
        <position position="303"/>
    </location>
    <ligand>
        <name>Mg(2+)</name>
        <dbReference type="ChEBI" id="CHEBI:18420"/>
        <label>2</label>
    </ligand>
</feature>
<name>DDL_STRPQ</name>
<organism>
    <name type="scientific">Streptococcus pyogenes serotype M3 (strain SSI-1)</name>
    <dbReference type="NCBI Taxonomy" id="193567"/>
    <lineage>
        <taxon>Bacteria</taxon>
        <taxon>Bacillati</taxon>
        <taxon>Bacillota</taxon>
        <taxon>Bacilli</taxon>
        <taxon>Lactobacillales</taxon>
        <taxon>Streptococcaceae</taxon>
        <taxon>Streptococcus</taxon>
    </lineage>
</organism>
<keyword id="KW-0067">ATP-binding</keyword>
<keyword id="KW-0133">Cell shape</keyword>
<keyword id="KW-0961">Cell wall biogenesis/degradation</keyword>
<keyword id="KW-0963">Cytoplasm</keyword>
<keyword id="KW-0436">Ligase</keyword>
<keyword id="KW-0460">Magnesium</keyword>
<keyword id="KW-0464">Manganese</keyword>
<keyword id="KW-0479">Metal-binding</keyword>
<keyword id="KW-0547">Nucleotide-binding</keyword>
<keyword id="KW-0573">Peptidoglycan synthesis</keyword>
<proteinExistence type="inferred from homology"/>
<accession>P0DA51</accession>
<accession>Q878Y1</accession>
<accession>Q8K6X7</accession>